<feature type="chain" id="PRO_0000428881" description="Aspartate kinase Ask_Ect">
    <location>
        <begin position="1"/>
        <end position="476"/>
    </location>
</feature>
<feature type="domain" description="ACT">
    <location>
        <begin position="405"/>
        <end position="476"/>
    </location>
</feature>
<keyword id="KW-0021">Allosteric enzyme</keyword>
<keyword id="KW-0067">ATP-binding</keyword>
<keyword id="KW-0963">Cytoplasm</keyword>
<keyword id="KW-0418">Kinase</keyword>
<keyword id="KW-0547">Nucleotide-binding</keyword>
<keyword id="KW-1185">Reference proteome</keyword>
<keyword id="KW-0808">Transferase</keyword>
<dbReference type="EC" id="2.7.2.4"/>
<dbReference type="EMBL" id="CP000304">
    <property type="protein sequence ID" value="ABP77884.1"/>
    <property type="status" value="ALT_INIT"/>
    <property type="molecule type" value="Genomic_DNA"/>
</dbReference>
<dbReference type="RefSeq" id="WP_013981377.1">
    <property type="nucleotide sequence ID" value="NC_009434.1"/>
</dbReference>
<dbReference type="SMR" id="A4VFY3"/>
<dbReference type="KEGG" id="psa:PST_0177"/>
<dbReference type="eggNOG" id="COG0527">
    <property type="taxonomic scope" value="Bacteria"/>
</dbReference>
<dbReference type="HOGENOM" id="CLU_047213_0_0_6"/>
<dbReference type="SABIO-RK" id="A4VFY3"/>
<dbReference type="UniPathway" id="UPA00067"/>
<dbReference type="Proteomes" id="UP000000233">
    <property type="component" value="Chromosome"/>
</dbReference>
<dbReference type="GO" id="GO:0005829">
    <property type="term" value="C:cytosol"/>
    <property type="evidence" value="ECO:0007669"/>
    <property type="project" value="TreeGrafter"/>
</dbReference>
<dbReference type="GO" id="GO:0004072">
    <property type="term" value="F:aspartate kinase activity"/>
    <property type="evidence" value="ECO:0000314"/>
    <property type="project" value="UniProtKB"/>
</dbReference>
<dbReference type="GO" id="GO:0005524">
    <property type="term" value="F:ATP binding"/>
    <property type="evidence" value="ECO:0007669"/>
    <property type="project" value="UniProtKB-KW"/>
</dbReference>
<dbReference type="GO" id="GO:0019491">
    <property type="term" value="P:ectoine biosynthetic process"/>
    <property type="evidence" value="ECO:0000314"/>
    <property type="project" value="UniProtKB"/>
</dbReference>
<dbReference type="GO" id="GO:0009090">
    <property type="term" value="P:homoserine biosynthetic process"/>
    <property type="evidence" value="ECO:0007669"/>
    <property type="project" value="TreeGrafter"/>
</dbReference>
<dbReference type="GO" id="GO:0009089">
    <property type="term" value="P:lysine biosynthetic process via diaminopimelate"/>
    <property type="evidence" value="ECO:0007669"/>
    <property type="project" value="TreeGrafter"/>
</dbReference>
<dbReference type="CDD" id="cd04910">
    <property type="entry name" value="ACT_AK-Ectoine_1"/>
    <property type="match status" value="1"/>
</dbReference>
<dbReference type="FunFam" id="3.30.2130.10:FF:000009">
    <property type="entry name" value="Aspartate kinase"/>
    <property type="match status" value="1"/>
</dbReference>
<dbReference type="FunFam" id="3.40.1160.10:FF:000043">
    <property type="entry name" value="Aspartate kinase"/>
    <property type="match status" value="1"/>
</dbReference>
<dbReference type="Gene3D" id="3.40.1160.10">
    <property type="entry name" value="Acetylglutamate kinase-like"/>
    <property type="match status" value="1"/>
</dbReference>
<dbReference type="Gene3D" id="3.30.2130.10">
    <property type="entry name" value="VC0802-like"/>
    <property type="match status" value="1"/>
</dbReference>
<dbReference type="InterPro" id="IPR036393">
    <property type="entry name" value="AceGlu_kinase-like_sf"/>
</dbReference>
<dbReference type="InterPro" id="IPR045865">
    <property type="entry name" value="ACT-like_dom_sf"/>
</dbReference>
<dbReference type="InterPro" id="IPR054352">
    <property type="entry name" value="ACT_Aspartokinase"/>
</dbReference>
<dbReference type="InterPro" id="IPR001048">
    <property type="entry name" value="Asp/Glu/Uridylate_kinase"/>
</dbReference>
<dbReference type="NCBIfam" id="NF006614">
    <property type="entry name" value="PRK09181.1"/>
    <property type="match status" value="1"/>
</dbReference>
<dbReference type="PANTHER" id="PTHR21499">
    <property type="entry name" value="ASPARTATE KINASE"/>
    <property type="match status" value="1"/>
</dbReference>
<dbReference type="PANTHER" id="PTHR21499:SF3">
    <property type="entry name" value="ASPARTOKINASE"/>
    <property type="match status" value="1"/>
</dbReference>
<dbReference type="Pfam" id="PF00696">
    <property type="entry name" value="AA_kinase"/>
    <property type="match status" value="1"/>
</dbReference>
<dbReference type="Pfam" id="PF22468">
    <property type="entry name" value="ACT_9"/>
    <property type="match status" value="1"/>
</dbReference>
<dbReference type="SUPFAM" id="SSF55021">
    <property type="entry name" value="ACT-like"/>
    <property type="match status" value="1"/>
</dbReference>
<dbReference type="SUPFAM" id="SSF53633">
    <property type="entry name" value="Carbamate kinase-like"/>
    <property type="match status" value="1"/>
</dbReference>
<reference key="1">
    <citation type="journal article" date="2008" name="Proc. Natl. Acad. Sci. U.S.A.">
        <title>Nitrogen fixation island and rhizosphere competence traits in the genome of root-associated Pseudomonas stutzeri A1501.</title>
        <authorList>
            <person name="Yan Y."/>
            <person name="Yang J."/>
            <person name="Dou Y."/>
            <person name="Chen M."/>
            <person name="Ping S."/>
            <person name="Peng J."/>
            <person name="Lu W."/>
            <person name="Zhang W."/>
            <person name="Yao Z."/>
            <person name="Li H."/>
            <person name="Liu W."/>
            <person name="He S."/>
            <person name="Geng L."/>
            <person name="Zhang X."/>
            <person name="Yang F."/>
            <person name="Yu H."/>
            <person name="Zhan Y."/>
            <person name="Li D."/>
            <person name="Lin Z."/>
            <person name="Wang Y."/>
            <person name="Elmerich C."/>
            <person name="Lin M."/>
            <person name="Jin Q."/>
        </authorList>
    </citation>
    <scope>NUCLEOTIDE SEQUENCE [LARGE SCALE GENOMIC DNA]</scope>
    <source>
        <strain>A1501</strain>
    </source>
</reference>
<reference key="2">
    <citation type="journal article" date="2011" name="J. Bacteriol.">
        <title>A specialized aspartokinase enhances the biosynthesis of the osmoprotectants ectoine and hydroxyectoine in Pseudomonas stutzeri A1501.</title>
        <authorList>
            <person name="Stoveken N."/>
            <person name="Pittelkow M."/>
            <person name="Sinner T."/>
            <person name="Jensen R.A."/>
            <person name="Heider J."/>
            <person name="Bremer E."/>
        </authorList>
    </citation>
    <scope>FUNCTION</scope>
    <scope>CATALYTIC ACTIVITY</scope>
    <scope>INDUCTION</scope>
    <scope>BIOPHYSICOCHEMICAL PROPERTIES</scope>
    <scope>ACTIVITY REGULATION</scope>
    <scope>SUBUNIT</scope>
</reference>
<protein>
    <recommendedName>
        <fullName>Aspartate kinase Ask_Ect</fullName>
        <ecNumber>2.7.2.4</ecNumber>
    </recommendedName>
    <alternativeName>
        <fullName>Aspartokinase</fullName>
    </alternativeName>
</protein>
<proteinExistence type="evidence at protein level"/>
<name>AKECT_STUS1</name>
<evidence type="ECO:0000250" key="1"/>
<evidence type="ECO:0000269" key="2">
    <source>
    </source>
</evidence>
<evidence type="ECO:0000305" key="3"/>
<sequence>MHTVEKIGGTSMSRFEEVLDNIFIGRREGAALYQRIFVVSAYSGMTNLLLEHKKTGEPGVYQRFADAQSEGAWREALEGVRQRMLAKNAELFSSEYELHAANQFINSRIDDASECMHSLQKLCAYGHFQLSEHLMKVREMLASLGEAHSAFNSVLALKQRGVNARLADLTGWQQEAPLPFEEMISSHFAGFDFSRELVVATGYTHCAEGLMNTFDRGYSEITFAQIAAATGAREAIIHKEFHLSSADPNLVGADKVVTIGRTNYDVADQLSNLGMEAIHPRAAKTLRRAGVELRIKNAFEPEHGGTLISQDYKSEKPCVEIIAGRKDVFGIEVFDQDMLGDIGYDMEISKLLKQLKLYVVNKDSDANSITYYASGSRKLINRAARLIEEQYPAAEVTVHNLAIVSAIGSDLKVKGILAKTVAALAEAGISIQAIHQSIRQVEMQCVVNEEDYDAAIAALHRALIEPENHGDVIAAA</sequence>
<gene>
    <name type="primary">ask</name>
    <name type="synonym">ask_ect</name>
    <name type="ordered locus">PST_0177</name>
</gene>
<accession>A4VFY3</accession>
<comment type="function">
    <text evidence="2">Involved in the biosynthesis of L-aspartate-beta-semialdehyde, which is an intermediate in the biosynthesis of ectoine, a highly soluble organic osmolyte, called compatible solute. Ectoine is used to avoid excessive water efflux, plasmolysis, molecular crowding of the cytoplasm, and cessation of growth in high salinity environments. Catalyzes the phosphorylation of the beta-carboxyl group of L-aspartate to yield 4-phospho-L-aspartate.</text>
</comment>
<comment type="catalytic activity">
    <reaction evidence="2">
        <text>L-aspartate + ATP = 4-phospho-L-aspartate + ADP</text>
        <dbReference type="Rhea" id="RHEA:23776"/>
        <dbReference type="ChEBI" id="CHEBI:29991"/>
        <dbReference type="ChEBI" id="CHEBI:30616"/>
        <dbReference type="ChEBI" id="CHEBI:57535"/>
        <dbReference type="ChEBI" id="CHEBI:456216"/>
        <dbReference type="EC" id="2.7.2.4"/>
    </reaction>
</comment>
<comment type="activity regulation">
    <text evidence="2">Allosterically and strongly feedback inhibited by tryptophan. The presence of either 650 mM NaCl or KCl reduces the inhibition by tryptophan.</text>
</comment>
<comment type="biophysicochemical properties">
    <kinetics>
        <KM evidence="2">1.3 mM for ATP</KM>
        <KM evidence="2">29.7 mM for L-aspartate</KM>
        <Vmax evidence="2">6.9 umol/min/mg enzyme</Vmax>
    </kinetics>
</comment>
<comment type="pathway">
    <text>Amine and polyamine biosynthesis; ectoine biosynthesis.</text>
</comment>
<comment type="subunit">
    <text evidence="2">Monomer.</text>
</comment>
<comment type="subcellular location">
    <subcellularLocation>
        <location evidence="1">Cytoplasm</location>
    </subcellularLocation>
</comment>
<comment type="induction">
    <text evidence="2">Induced in response to osmotic stress.</text>
</comment>
<comment type="similarity">
    <text evidence="3">Belongs to the aspartokinase family.</text>
</comment>
<comment type="sequence caution" evidence="3">
    <conflict type="erroneous initiation">
        <sequence resource="EMBL-CDS" id="ABP77884"/>
    </conflict>
    <text>Truncated N-terminus.</text>
</comment>
<organism>
    <name type="scientific">Stutzerimonas stutzeri (strain A1501)</name>
    <name type="common">Pseudomonas stutzeri</name>
    <dbReference type="NCBI Taxonomy" id="379731"/>
    <lineage>
        <taxon>Bacteria</taxon>
        <taxon>Pseudomonadati</taxon>
        <taxon>Pseudomonadota</taxon>
        <taxon>Gammaproteobacteria</taxon>
        <taxon>Pseudomonadales</taxon>
        <taxon>Pseudomonadaceae</taxon>
        <taxon>Stutzerimonas</taxon>
    </lineage>
</organism>